<keyword id="KW-1032">Host cell membrane</keyword>
<keyword id="KW-1038">Host endoplasmic reticulum</keyword>
<keyword id="KW-1040">Host Golgi apparatus</keyword>
<keyword id="KW-1043">Host membrane</keyword>
<keyword id="KW-0472">Membrane</keyword>
<keyword id="KW-0597">Phosphoprotein</keyword>
<keyword id="KW-0735">Signal-anchor</keyword>
<keyword id="KW-0812">Transmembrane</keyword>
<keyword id="KW-1133">Transmembrane helix</keyword>
<keyword id="KW-0261">Viral envelope protein</keyword>
<keyword id="KW-0946">Virion</keyword>
<protein>
    <recommendedName>
        <fullName>Envelope protein US9 homolog</fullName>
    </recommendedName>
    <alternativeName>
        <fullName>11 kDa protein</fullName>
    </alternativeName>
</protein>
<organismHost>
    <name type="scientific">Sus scrofa</name>
    <name type="common">Pig</name>
    <dbReference type="NCBI Taxonomy" id="9823"/>
</organismHost>
<feature type="chain" id="PRO_0000116141" description="Envelope protein US9 homolog">
    <location>
        <begin position="1"/>
        <end position="106"/>
    </location>
</feature>
<feature type="topological domain" description="Intravirion" evidence="5">
    <location>
        <begin position="1"/>
        <end position="81"/>
    </location>
</feature>
<feature type="transmembrane region" description="Helical; Signal-anchor for type II membrane protein" evidence="5">
    <location>
        <begin position="82"/>
        <end position="102"/>
    </location>
</feature>
<feature type="topological domain" description="Virion surface" evidence="5">
    <location>
        <begin position="103"/>
        <end position="106"/>
    </location>
</feature>
<feature type="region of interest" description="Disordered" evidence="3">
    <location>
        <begin position="1"/>
        <end position="61"/>
    </location>
</feature>
<feature type="region of interest" description="Acidic">
    <location>
        <begin position="44"/>
        <end position="56"/>
    </location>
</feature>
<feature type="short sequence motif" description="Di-leucine internalization motif" evidence="2">
    <location>
        <begin position="29"/>
        <end position="30"/>
    </location>
</feature>
<feature type="modified residue" description="Phosphoserine; by host CK2" evidence="2">
    <location>
        <position position="51"/>
    </location>
</feature>
<feature type="modified residue" description="Phosphoserine; by host CK2" evidence="2">
    <location>
        <position position="53"/>
    </location>
</feature>
<name>US9_SUHVR</name>
<proteinExistence type="evidence at protein level"/>
<comment type="function">
    <text evidence="4">Essential for the anterograde spread of the infection throughout the host nervous system. Together with the gE/gI heterodimer, US9 is involved in the sorting and transport of viral structural components toward axon tips.</text>
</comment>
<comment type="subcellular location">
    <subcellularLocation>
        <location>Virion membrane</location>
        <topology>Single-pass type II membrane protein</topology>
    </subcellularLocation>
    <subcellularLocation>
        <location>Host Golgi apparatus membrane</location>
        <topology>Single-pass type II membrane protein</topology>
    </subcellularLocation>
    <subcellularLocation>
        <location evidence="1">Host smooth endoplasmic reticulum membrane</location>
        <topology evidence="1">Single-pass type II membrane protein</topology>
    </subcellularLocation>
    <subcellularLocation>
        <location evidence="5">Host cell membrane</location>
        <topology evidence="5">Single-pass type II membrane protein</topology>
    </subcellularLocation>
    <text>During virion morphogenesis, this protein probably accumulates in the endosomes and trans-Golgi where secondary envelopment occurs. It is probably transported to the cell surface from where it is endocytosed and directed to the trans-Golgi network (TGN), maybe through an interaction with PACS-1 sorting protein.</text>
</comment>
<comment type="PTM">
    <text evidence="5">Phosphorylated on serines within the acidic cluster. Phosphorylation determines whether endocytosed viral US9 traffics to the trans-Golgi network or recycles to the cell membrane.</text>
</comment>
<comment type="PTM">
    <text>Not N-glycosylated.</text>
</comment>
<comment type="similarity">
    <text evidence="5">Belongs to the alphaherpesvirinae envelope protein US9 family.</text>
</comment>
<evidence type="ECO:0000250" key="1"/>
<evidence type="ECO:0000255" key="2"/>
<evidence type="ECO:0000256" key="3">
    <source>
        <dbReference type="SAM" id="MobiDB-lite"/>
    </source>
</evidence>
<evidence type="ECO:0000269" key="4">
    <source>
    </source>
</evidence>
<evidence type="ECO:0000305" key="5"/>
<dbReference type="EMBL" id="M16769">
    <property type="protein sequence ID" value="AAA47462.1"/>
    <property type="molecule type" value="Genomic_DNA"/>
</dbReference>
<dbReference type="PIR" id="A27815">
    <property type="entry name" value="GIBEPR"/>
</dbReference>
<dbReference type="SMR" id="P11313"/>
<dbReference type="GO" id="GO:0043657">
    <property type="term" value="C:host cell"/>
    <property type="evidence" value="ECO:0007669"/>
    <property type="project" value="GOC"/>
</dbReference>
<dbReference type="GO" id="GO:0044178">
    <property type="term" value="C:host cell Golgi membrane"/>
    <property type="evidence" value="ECO:0007669"/>
    <property type="project" value="UniProtKB-SubCell"/>
</dbReference>
<dbReference type="GO" id="GO:0020002">
    <property type="term" value="C:host cell plasma membrane"/>
    <property type="evidence" value="ECO:0007669"/>
    <property type="project" value="UniProtKB-SubCell"/>
</dbReference>
<dbReference type="GO" id="GO:0044171">
    <property type="term" value="C:host cell smooth endoplasmic reticulum membrane"/>
    <property type="evidence" value="ECO:0007669"/>
    <property type="project" value="UniProtKB-SubCell"/>
</dbReference>
<dbReference type="GO" id="GO:0016020">
    <property type="term" value="C:membrane"/>
    <property type="evidence" value="ECO:0007669"/>
    <property type="project" value="UniProtKB-KW"/>
</dbReference>
<dbReference type="GO" id="GO:0019031">
    <property type="term" value="C:viral envelope"/>
    <property type="evidence" value="ECO:0007669"/>
    <property type="project" value="UniProtKB-KW"/>
</dbReference>
<dbReference type="GO" id="GO:0055036">
    <property type="term" value="C:virion membrane"/>
    <property type="evidence" value="ECO:0007669"/>
    <property type="project" value="UniProtKB-SubCell"/>
</dbReference>
<dbReference type="GO" id="GO:0075733">
    <property type="term" value="P:intracellular transport of virus"/>
    <property type="evidence" value="ECO:0007669"/>
    <property type="project" value="InterPro"/>
</dbReference>
<dbReference type="InterPro" id="IPR009278">
    <property type="entry name" value="Herpes_US9"/>
</dbReference>
<dbReference type="Pfam" id="PF06072">
    <property type="entry name" value="Herpes_US9"/>
    <property type="match status" value="1"/>
</dbReference>
<accession>P11313</accession>
<sequence>MPTAAPADMDTFDPSAPVPTSVSNPAADVLLAPKGPRSPLRPQDDSDCYYSESDNETPSEFLRRVGRRQAARRRRRRCLMGVAISAAALVICSLSALIGGIIARHV</sequence>
<reference key="1">
    <citation type="journal article" date="1987" name="Virology">
        <title>A small open reading frame in pseudorabies virus and implications for evolutionary relationships between herpesviruses.</title>
        <authorList>
            <person name="Petrovskis E.A."/>
            <person name="Post L.E."/>
        </authorList>
    </citation>
    <scope>NUCLEOTIDE SEQUENCE [GENOMIC DNA]</scope>
</reference>
<reference key="2">
    <citation type="journal article" date="1998" name="J. Virol.">
        <title>The Us9 gene product of pseudorabies virus, an alphaherpesvirus, is a phosphorylated, tail-anchored type II membrane protein.</title>
        <authorList>
            <person name="Brideau A.D."/>
            <person name="Banfield B.W."/>
            <person name="Enquist L.W."/>
        </authorList>
    </citation>
    <scope>PHOSPHORYLATION</scope>
    <scope>TOPOLOGY</scope>
    <scope>SUBCELLULAR LOCATION</scope>
</reference>
<reference key="3">
    <citation type="journal article" date="2009" name="J. Virol.">
        <title>Comparison of the pseudorabies virus Us9 protein with homologs from other veterinary and human alphaherpesviruses.</title>
        <authorList>
            <person name="Lyman M.G."/>
            <person name="Kemp C.D."/>
            <person name="Taylor M.P."/>
            <person name="Enquist L.W."/>
        </authorList>
    </citation>
    <scope>FUNCTION</scope>
    <scope>TOPOLOGY</scope>
    <scope>SUBCELLULAR LOCATION</scope>
</reference>
<organism>
    <name type="scientific">Suid herpesvirus 1 (strain Rice)</name>
    <name type="common">SuHV-1</name>
    <name type="synonym">Pseudorabies virus (strain Rice)</name>
    <dbReference type="NCBI Taxonomy" id="10350"/>
    <lineage>
        <taxon>Viruses</taxon>
        <taxon>Duplodnaviria</taxon>
        <taxon>Heunggongvirae</taxon>
        <taxon>Peploviricota</taxon>
        <taxon>Herviviricetes</taxon>
        <taxon>Herpesvirales</taxon>
        <taxon>Orthoherpesviridae</taxon>
        <taxon>Alphaherpesvirinae</taxon>
        <taxon>Varicellovirus</taxon>
        <taxon>Varicellovirus suidalpha1</taxon>
        <taxon>Suid herpesvirus 1</taxon>
    </lineage>
</organism>